<name>NFUA_SODGM</name>
<reference key="1">
    <citation type="journal article" date="2006" name="Genome Res.">
        <title>Massive genome erosion and functional adaptations provide insights into the symbiotic lifestyle of Sodalis glossinidius in the tsetse host.</title>
        <authorList>
            <person name="Toh H."/>
            <person name="Weiss B.L."/>
            <person name="Perkin S.A.H."/>
            <person name="Yamashita A."/>
            <person name="Oshima K."/>
            <person name="Hattori M."/>
            <person name="Aksoy S."/>
        </authorList>
    </citation>
    <scope>NUCLEOTIDE SEQUENCE [LARGE SCALE GENOMIC DNA]</scope>
    <source>
        <strain>morsitans</strain>
    </source>
</reference>
<gene>
    <name evidence="1" type="primary">nfuA</name>
    <name type="ordered locus">SG2325</name>
</gene>
<dbReference type="EMBL" id="AP008232">
    <property type="protein sequence ID" value="BAE75600.1"/>
    <property type="molecule type" value="Genomic_DNA"/>
</dbReference>
<dbReference type="RefSeq" id="WP_011412132.1">
    <property type="nucleotide sequence ID" value="NC_007712.1"/>
</dbReference>
<dbReference type="SMR" id="Q2NQH5"/>
<dbReference type="STRING" id="343509.SG2325"/>
<dbReference type="KEGG" id="sgl:SG2325"/>
<dbReference type="eggNOG" id="COG0316">
    <property type="taxonomic scope" value="Bacteria"/>
</dbReference>
<dbReference type="eggNOG" id="COG0694">
    <property type="taxonomic scope" value="Bacteria"/>
</dbReference>
<dbReference type="HOGENOM" id="CLU_094569_0_0_6"/>
<dbReference type="OrthoDB" id="9785450at2"/>
<dbReference type="BioCyc" id="SGLO343509:SGP1_RS21160-MONOMER"/>
<dbReference type="Proteomes" id="UP000001932">
    <property type="component" value="Chromosome"/>
</dbReference>
<dbReference type="GO" id="GO:0051539">
    <property type="term" value="F:4 iron, 4 sulfur cluster binding"/>
    <property type="evidence" value="ECO:0007669"/>
    <property type="project" value="UniProtKB-UniRule"/>
</dbReference>
<dbReference type="GO" id="GO:0005506">
    <property type="term" value="F:iron ion binding"/>
    <property type="evidence" value="ECO:0007669"/>
    <property type="project" value="InterPro"/>
</dbReference>
<dbReference type="GO" id="GO:0016226">
    <property type="term" value="P:iron-sulfur cluster assembly"/>
    <property type="evidence" value="ECO:0007669"/>
    <property type="project" value="UniProtKB-UniRule"/>
</dbReference>
<dbReference type="GO" id="GO:0051604">
    <property type="term" value="P:protein maturation"/>
    <property type="evidence" value="ECO:0007669"/>
    <property type="project" value="UniProtKB-UniRule"/>
</dbReference>
<dbReference type="Gene3D" id="3.30.300.130">
    <property type="entry name" value="Fe-S cluster assembly (FSCA)"/>
    <property type="match status" value="1"/>
</dbReference>
<dbReference type="Gene3D" id="2.60.300.12">
    <property type="entry name" value="HesB-like domain"/>
    <property type="match status" value="1"/>
</dbReference>
<dbReference type="HAMAP" id="MF_01637">
    <property type="entry name" value="Fe_S_biogen_NfuA"/>
    <property type="match status" value="1"/>
</dbReference>
<dbReference type="InterPro" id="IPR017726">
    <property type="entry name" value="Fe/S_biogenesis_protein_NfuA"/>
</dbReference>
<dbReference type="InterPro" id="IPR000361">
    <property type="entry name" value="FeS_biogenesis"/>
</dbReference>
<dbReference type="InterPro" id="IPR034904">
    <property type="entry name" value="FSCA_dom_sf"/>
</dbReference>
<dbReference type="InterPro" id="IPR035903">
    <property type="entry name" value="HesB-like_dom_sf"/>
</dbReference>
<dbReference type="InterPro" id="IPR001075">
    <property type="entry name" value="NIF_FeS_clus_asmbl_NifU_C"/>
</dbReference>
<dbReference type="NCBIfam" id="NF008392">
    <property type="entry name" value="PRK11190.1"/>
    <property type="match status" value="1"/>
</dbReference>
<dbReference type="NCBIfam" id="TIGR03341">
    <property type="entry name" value="YhgI_GntY"/>
    <property type="match status" value="1"/>
</dbReference>
<dbReference type="PANTHER" id="PTHR11178:SF51">
    <property type="entry name" value="FE_S BIOGENESIS PROTEIN NFUA"/>
    <property type="match status" value="1"/>
</dbReference>
<dbReference type="PANTHER" id="PTHR11178">
    <property type="entry name" value="IRON-SULFUR CLUSTER SCAFFOLD PROTEIN NFU-RELATED"/>
    <property type="match status" value="1"/>
</dbReference>
<dbReference type="Pfam" id="PF01521">
    <property type="entry name" value="Fe-S_biosyn"/>
    <property type="match status" value="1"/>
</dbReference>
<dbReference type="Pfam" id="PF01106">
    <property type="entry name" value="NifU"/>
    <property type="match status" value="1"/>
</dbReference>
<dbReference type="SUPFAM" id="SSF117916">
    <property type="entry name" value="Fe-S cluster assembly (FSCA) domain-like"/>
    <property type="match status" value="1"/>
</dbReference>
<dbReference type="SUPFAM" id="SSF89360">
    <property type="entry name" value="HesB-like domain"/>
    <property type="match status" value="1"/>
</dbReference>
<keyword id="KW-0004">4Fe-4S</keyword>
<keyword id="KW-0408">Iron</keyword>
<keyword id="KW-0411">Iron-sulfur</keyword>
<keyword id="KW-0479">Metal-binding</keyword>
<protein>
    <recommendedName>
        <fullName evidence="1">Fe/S biogenesis protein NfuA</fullName>
    </recommendedName>
</protein>
<proteinExistence type="inferred from homology"/>
<accession>Q2NQH5</accession>
<comment type="function">
    <text evidence="1">Involved in iron-sulfur cluster biogenesis. Binds a 4Fe-4S cluster, can transfer this cluster to apoproteins, and thereby intervenes in the maturation of Fe/S proteins. Could also act as a scaffold/chaperone for damaged Fe/S proteins.</text>
</comment>
<comment type="cofactor">
    <cofactor evidence="1">
        <name>[4Fe-4S] cluster</name>
        <dbReference type="ChEBI" id="CHEBI:49883"/>
    </cofactor>
    <text evidence="1">Binds 1 [4Fe-4S] cluster per subunit. The cluster is presumably bound at the interface of two monomers.</text>
</comment>
<comment type="subunit">
    <text evidence="1">Homodimer.</text>
</comment>
<comment type="similarity">
    <text evidence="1">Belongs to the NfuA family.</text>
</comment>
<organism>
    <name type="scientific">Sodalis glossinidius (strain morsitans)</name>
    <dbReference type="NCBI Taxonomy" id="343509"/>
    <lineage>
        <taxon>Bacteria</taxon>
        <taxon>Pseudomonadati</taxon>
        <taxon>Pseudomonadota</taxon>
        <taxon>Gammaproteobacteria</taxon>
        <taxon>Enterobacterales</taxon>
        <taxon>Bruguierivoracaceae</taxon>
        <taxon>Sodalis</taxon>
    </lineage>
</organism>
<sequence length="191" mass="21181">MIRITDAAQEHFAKLLSNQEPGTQIRVFVINPGTPNAECGVSYCPPDAVEATDTELKFDKISAYVDELSAPYLQDAEIDFVTDKLGSQLTLKAPNAKMRKVSDEAPLIERVEYLLQSQINPQLAGHGGQVTLMEITDDMLAILQFGGGCNGCSMVDYTLKEGIEKELLEKFPELKGVRDLTEHQRGEHSYY</sequence>
<evidence type="ECO:0000255" key="1">
    <source>
        <dbReference type="HAMAP-Rule" id="MF_01637"/>
    </source>
</evidence>
<feature type="chain" id="PRO_0000268246" description="Fe/S biogenesis protein NfuA">
    <location>
        <begin position="1"/>
        <end position="191"/>
    </location>
</feature>
<feature type="binding site" evidence="1">
    <location>
        <position position="149"/>
    </location>
    <ligand>
        <name>[4Fe-4S] cluster</name>
        <dbReference type="ChEBI" id="CHEBI:49883"/>
    </ligand>
</feature>
<feature type="binding site" evidence="1">
    <location>
        <position position="152"/>
    </location>
    <ligand>
        <name>[4Fe-4S] cluster</name>
        <dbReference type="ChEBI" id="CHEBI:49883"/>
    </ligand>
</feature>